<sequence>MGNNVVVLGTQWGDEGKGKIVDLLTERAKYVVRYQGGHNAGHTLVINGEKTVLHLIPSGILRENVTSIIGNGVVLSPSALMKEMKELEDRGIPVRERLLLSEACPLILDYHVALDNAREKARGAKAIGTTGRGIGPAYEDKVARRGLRVGDLFDKETFAEKLKEVMEYHNFQLVNYYKAEAVDYQKVLDDTMAVADILTSMVVDVSDLLDQARQRGDFVMFEGAQGTLLDIDHGTYPYVTSSNTTAGGVATGSGLGPRYVDYVLGILKAYSTRVGAGPFPTELFDETGEFLCKQGNEYGATTGRRRRTGWLDTVAVRRAVQLNSLSGFCLTKLDVLDGLKEVKLCVAYRMPDGREVTTTPLAADDWKGVEPIYETMPGWSESTFGVKDRSGLPQAALNYIKRIEELTGVPIDIISTGPDRTETMILRDPFDA</sequence>
<keyword id="KW-0963">Cytoplasm</keyword>
<keyword id="KW-0342">GTP-binding</keyword>
<keyword id="KW-0436">Ligase</keyword>
<keyword id="KW-0460">Magnesium</keyword>
<keyword id="KW-0479">Metal-binding</keyword>
<keyword id="KW-0547">Nucleotide-binding</keyword>
<keyword id="KW-0658">Purine biosynthesis</keyword>
<keyword id="KW-1185">Reference proteome</keyword>
<organism>
    <name type="scientific">Salmonella typhimurium (strain LT2 / SGSC1412 / ATCC 700720)</name>
    <dbReference type="NCBI Taxonomy" id="99287"/>
    <lineage>
        <taxon>Bacteria</taxon>
        <taxon>Pseudomonadati</taxon>
        <taxon>Pseudomonadota</taxon>
        <taxon>Gammaproteobacteria</taxon>
        <taxon>Enterobacterales</taxon>
        <taxon>Enterobacteriaceae</taxon>
        <taxon>Salmonella</taxon>
    </lineage>
</organism>
<comment type="function">
    <text evidence="2">Plays an important role in the de novo pathway of purine nucleotide biosynthesis. Catalyzes the first committed step in the biosynthesis of AMP from IMP.</text>
</comment>
<comment type="catalytic activity">
    <reaction evidence="2">
        <text>IMP + L-aspartate + GTP = N(6)-(1,2-dicarboxyethyl)-AMP + GDP + phosphate + 2 H(+)</text>
        <dbReference type="Rhea" id="RHEA:15753"/>
        <dbReference type="ChEBI" id="CHEBI:15378"/>
        <dbReference type="ChEBI" id="CHEBI:29991"/>
        <dbReference type="ChEBI" id="CHEBI:37565"/>
        <dbReference type="ChEBI" id="CHEBI:43474"/>
        <dbReference type="ChEBI" id="CHEBI:57567"/>
        <dbReference type="ChEBI" id="CHEBI:58053"/>
        <dbReference type="ChEBI" id="CHEBI:58189"/>
        <dbReference type="EC" id="6.3.4.4"/>
    </reaction>
</comment>
<comment type="cofactor">
    <cofactor evidence="2">
        <name>Mg(2+)</name>
        <dbReference type="ChEBI" id="CHEBI:18420"/>
    </cofactor>
    <text evidence="2">Binds 1 Mg(2+) ion per subunit.</text>
</comment>
<comment type="pathway">
    <text evidence="2">Purine metabolism; AMP biosynthesis via de novo pathway; AMP from IMP: step 1/2.</text>
</comment>
<comment type="subunit">
    <text evidence="2">Homodimer.</text>
</comment>
<comment type="subcellular location">
    <subcellularLocation>
        <location evidence="2">Cytoplasm</location>
    </subcellularLocation>
</comment>
<comment type="similarity">
    <text evidence="2">Belongs to the adenylosuccinate synthetase family.</text>
</comment>
<dbReference type="EC" id="6.3.4.4" evidence="2"/>
<dbReference type="EMBL" id="AE006468">
    <property type="protein sequence ID" value="AAL23186.1"/>
    <property type="molecule type" value="Genomic_DNA"/>
</dbReference>
<dbReference type="RefSeq" id="NP_463227.1">
    <property type="nucleotide sequence ID" value="NC_003197.2"/>
</dbReference>
<dbReference type="RefSeq" id="WP_000527972.1">
    <property type="nucleotide sequence ID" value="NC_003197.2"/>
</dbReference>
<dbReference type="SMR" id="P65882"/>
<dbReference type="STRING" id="99287.STM4366"/>
<dbReference type="PaxDb" id="99287-STM4366"/>
<dbReference type="GeneID" id="1255892"/>
<dbReference type="KEGG" id="stm:STM4366"/>
<dbReference type="PATRIC" id="fig|99287.12.peg.4590"/>
<dbReference type="HOGENOM" id="CLU_029848_0_0_6"/>
<dbReference type="OMA" id="FHHAKPI"/>
<dbReference type="PhylomeDB" id="P65882"/>
<dbReference type="BioCyc" id="SENT99287:STM4366-MONOMER"/>
<dbReference type="UniPathway" id="UPA00075">
    <property type="reaction ID" value="UER00335"/>
</dbReference>
<dbReference type="PHI-base" id="PHI:2625"/>
<dbReference type="PHI-base" id="PHI:9416"/>
<dbReference type="Proteomes" id="UP000001014">
    <property type="component" value="Chromosome"/>
</dbReference>
<dbReference type="GO" id="GO:0005737">
    <property type="term" value="C:cytoplasm"/>
    <property type="evidence" value="ECO:0000318"/>
    <property type="project" value="GO_Central"/>
</dbReference>
<dbReference type="GO" id="GO:0004019">
    <property type="term" value="F:adenylosuccinate synthase activity"/>
    <property type="evidence" value="ECO:0000318"/>
    <property type="project" value="GO_Central"/>
</dbReference>
<dbReference type="GO" id="GO:0005525">
    <property type="term" value="F:GTP binding"/>
    <property type="evidence" value="ECO:0007669"/>
    <property type="project" value="UniProtKB-UniRule"/>
</dbReference>
<dbReference type="GO" id="GO:0000287">
    <property type="term" value="F:magnesium ion binding"/>
    <property type="evidence" value="ECO:0007669"/>
    <property type="project" value="UniProtKB-UniRule"/>
</dbReference>
<dbReference type="GO" id="GO:0044208">
    <property type="term" value="P:'de novo' AMP biosynthetic process"/>
    <property type="evidence" value="ECO:0000318"/>
    <property type="project" value="GO_Central"/>
</dbReference>
<dbReference type="GO" id="GO:0046040">
    <property type="term" value="P:IMP metabolic process"/>
    <property type="evidence" value="ECO:0000318"/>
    <property type="project" value="GO_Central"/>
</dbReference>
<dbReference type="CDD" id="cd03108">
    <property type="entry name" value="AdSS"/>
    <property type="match status" value="1"/>
</dbReference>
<dbReference type="FunFam" id="1.10.300.10:FF:000001">
    <property type="entry name" value="Adenylosuccinate synthetase"/>
    <property type="match status" value="1"/>
</dbReference>
<dbReference type="FunFam" id="3.90.170.10:FF:000001">
    <property type="entry name" value="Adenylosuccinate synthetase"/>
    <property type="match status" value="1"/>
</dbReference>
<dbReference type="Gene3D" id="3.40.440.10">
    <property type="entry name" value="Adenylosuccinate Synthetase, subunit A, domain 1"/>
    <property type="match status" value="1"/>
</dbReference>
<dbReference type="Gene3D" id="1.10.300.10">
    <property type="entry name" value="Adenylosuccinate Synthetase, subunit A, domain 2"/>
    <property type="match status" value="1"/>
</dbReference>
<dbReference type="Gene3D" id="3.90.170.10">
    <property type="entry name" value="Adenylosuccinate Synthetase, subunit A, domain 3"/>
    <property type="match status" value="1"/>
</dbReference>
<dbReference type="HAMAP" id="MF_00011">
    <property type="entry name" value="Adenylosucc_synth"/>
    <property type="match status" value="1"/>
</dbReference>
<dbReference type="InterPro" id="IPR018220">
    <property type="entry name" value="Adenylosuccin_syn_GTP-bd"/>
</dbReference>
<dbReference type="InterPro" id="IPR033128">
    <property type="entry name" value="Adenylosuccin_syn_Lys_AS"/>
</dbReference>
<dbReference type="InterPro" id="IPR042109">
    <property type="entry name" value="Adenylosuccinate_synth_dom1"/>
</dbReference>
<dbReference type="InterPro" id="IPR042110">
    <property type="entry name" value="Adenylosuccinate_synth_dom2"/>
</dbReference>
<dbReference type="InterPro" id="IPR042111">
    <property type="entry name" value="Adenylosuccinate_synth_dom3"/>
</dbReference>
<dbReference type="InterPro" id="IPR001114">
    <property type="entry name" value="Adenylosuccinate_synthetase"/>
</dbReference>
<dbReference type="InterPro" id="IPR027417">
    <property type="entry name" value="P-loop_NTPase"/>
</dbReference>
<dbReference type="NCBIfam" id="NF002223">
    <property type="entry name" value="PRK01117.1"/>
    <property type="match status" value="1"/>
</dbReference>
<dbReference type="NCBIfam" id="TIGR00184">
    <property type="entry name" value="purA"/>
    <property type="match status" value="1"/>
</dbReference>
<dbReference type="PANTHER" id="PTHR11846">
    <property type="entry name" value="ADENYLOSUCCINATE SYNTHETASE"/>
    <property type="match status" value="1"/>
</dbReference>
<dbReference type="PANTHER" id="PTHR11846:SF0">
    <property type="entry name" value="ADENYLOSUCCINATE SYNTHETASE"/>
    <property type="match status" value="1"/>
</dbReference>
<dbReference type="Pfam" id="PF00709">
    <property type="entry name" value="Adenylsucc_synt"/>
    <property type="match status" value="1"/>
</dbReference>
<dbReference type="SMART" id="SM00788">
    <property type="entry name" value="Adenylsucc_synt"/>
    <property type="match status" value="1"/>
</dbReference>
<dbReference type="SUPFAM" id="SSF52540">
    <property type="entry name" value="P-loop containing nucleoside triphosphate hydrolases"/>
    <property type="match status" value="1"/>
</dbReference>
<dbReference type="PROSITE" id="PS01266">
    <property type="entry name" value="ADENYLOSUCCIN_SYN_1"/>
    <property type="match status" value="1"/>
</dbReference>
<dbReference type="PROSITE" id="PS00513">
    <property type="entry name" value="ADENYLOSUCCIN_SYN_2"/>
    <property type="match status" value="1"/>
</dbReference>
<feature type="initiator methionine" description="Removed" evidence="1">
    <location>
        <position position="1"/>
    </location>
</feature>
<feature type="chain" id="PRO_0000095221" description="Adenylosuccinate synthetase">
    <location>
        <begin position="2"/>
        <end position="432"/>
    </location>
</feature>
<feature type="active site" description="Proton acceptor" evidence="2">
    <location>
        <position position="14"/>
    </location>
</feature>
<feature type="active site" description="Proton donor" evidence="2">
    <location>
        <position position="42"/>
    </location>
</feature>
<feature type="binding site" evidence="2">
    <location>
        <begin position="13"/>
        <end position="19"/>
    </location>
    <ligand>
        <name>GTP</name>
        <dbReference type="ChEBI" id="CHEBI:37565"/>
    </ligand>
</feature>
<feature type="binding site" description="in other chain" evidence="2">
    <location>
        <begin position="14"/>
        <end position="17"/>
    </location>
    <ligand>
        <name>IMP</name>
        <dbReference type="ChEBI" id="CHEBI:58053"/>
        <note>ligand shared between dimeric partners</note>
    </ligand>
</feature>
<feature type="binding site" evidence="2">
    <location>
        <position position="14"/>
    </location>
    <ligand>
        <name>Mg(2+)</name>
        <dbReference type="ChEBI" id="CHEBI:18420"/>
    </ligand>
</feature>
<feature type="binding site" description="in other chain" evidence="2">
    <location>
        <begin position="39"/>
        <end position="42"/>
    </location>
    <ligand>
        <name>IMP</name>
        <dbReference type="ChEBI" id="CHEBI:58053"/>
        <note>ligand shared between dimeric partners</note>
    </ligand>
</feature>
<feature type="binding site" evidence="2">
    <location>
        <begin position="41"/>
        <end position="43"/>
    </location>
    <ligand>
        <name>GTP</name>
        <dbReference type="ChEBI" id="CHEBI:37565"/>
    </ligand>
</feature>
<feature type="binding site" evidence="2">
    <location>
        <position position="41"/>
    </location>
    <ligand>
        <name>Mg(2+)</name>
        <dbReference type="ChEBI" id="CHEBI:18420"/>
    </ligand>
</feature>
<feature type="binding site" description="in other chain" evidence="2">
    <location>
        <position position="130"/>
    </location>
    <ligand>
        <name>IMP</name>
        <dbReference type="ChEBI" id="CHEBI:58053"/>
        <note>ligand shared between dimeric partners</note>
    </ligand>
</feature>
<feature type="binding site" evidence="2">
    <location>
        <position position="144"/>
    </location>
    <ligand>
        <name>IMP</name>
        <dbReference type="ChEBI" id="CHEBI:58053"/>
        <note>ligand shared between dimeric partners</note>
    </ligand>
</feature>
<feature type="binding site" description="in other chain" evidence="2">
    <location>
        <position position="225"/>
    </location>
    <ligand>
        <name>IMP</name>
        <dbReference type="ChEBI" id="CHEBI:58053"/>
        <note>ligand shared between dimeric partners</note>
    </ligand>
</feature>
<feature type="binding site" description="in other chain" evidence="2">
    <location>
        <position position="240"/>
    </location>
    <ligand>
        <name>IMP</name>
        <dbReference type="ChEBI" id="CHEBI:58053"/>
        <note>ligand shared between dimeric partners</note>
    </ligand>
</feature>
<feature type="binding site" evidence="2">
    <location>
        <begin position="300"/>
        <end position="306"/>
    </location>
    <ligand>
        <name>substrate</name>
    </ligand>
</feature>
<feature type="binding site" description="in other chain" evidence="2">
    <location>
        <position position="304"/>
    </location>
    <ligand>
        <name>IMP</name>
        <dbReference type="ChEBI" id="CHEBI:58053"/>
        <note>ligand shared between dimeric partners</note>
    </ligand>
</feature>
<feature type="binding site" evidence="2">
    <location>
        <position position="306"/>
    </location>
    <ligand>
        <name>GTP</name>
        <dbReference type="ChEBI" id="CHEBI:37565"/>
    </ligand>
</feature>
<feature type="binding site" evidence="2">
    <location>
        <begin position="332"/>
        <end position="334"/>
    </location>
    <ligand>
        <name>GTP</name>
        <dbReference type="ChEBI" id="CHEBI:37565"/>
    </ligand>
</feature>
<feature type="binding site" evidence="2">
    <location>
        <begin position="415"/>
        <end position="417"/>
    </location>
    <ligand>
        <name>GTP</name>
        <dbReference type="ChEBI" id="CHEBI:37565"/>
    </ligand>
</feature>
<gene>
    <name evidence="2" type="primary">purA</name>
    <name type="ordered locus">STM4366</name>
</gene>
<accession>P65882</accession>
<accession>Q8XGP1</accession>
<name>PURA_SALTY</name>
<protein>
    <recommendedName>
        <fullName evidence="2">Adenylosuccinate synthetase</fullName>
        <shortName evidence="2">AMPSase</shortName>
        <shortName evidence="2">AdSS</shortName>
        <ecNumber evidence="2">6.3.4.4</ecNumber>
    </recommendedName>
    <alternativeName>
        <fullName evidence="2">IMP--aspartate ligase</fullName>
    </alternativeName>
</protein>
<evidence type="ECO:0000250" key="1"/>
<evidence type="ECO:0000255" key="2">
    <source>
        <dbReference type="HAMAP-Rule" id="MF_00011"/>
    </source>
</evidence>
<reference key="1">
    <citation type="journal article" date="2001" name="Nature">
        <title>Complete genome sequence of Salmonella enterica serovar Typhimurium LT2.</title>
        <authorList>
            <person name="McClelland M."/>
            <person name="Sanderson K.E."/>
            <person name="Spieth J."/>
            <person name="Clifton S.W."/>
            <person name="Latreille P."/>
            <person name="Courtney L."/>
            <person name="Porwollik S."/>
            <person name="Ali J."/>
            <person name="Dante M."/>
            <person name="Du F."/>
            <person name="Hou S."/>
            <person name="Layman D."/>
            <person name="Leonard S."/>
            <person name="Nguyen C."/>
            <person name="Scott K."/>
            <person name="Holmes A."/>
            <person name="Grewal N."/>
            <person name="Mulvaney E."/>
            <person name="Ryan E."/>
            <person name="Sun H."/>
            <person name="Florea L."/>
            <person name="Miller W."/>
            <person name="Stoneking T."/>
            <person name="Nhan M."/>
            <person name="Waterston R."/>
            <person name="Wilson R.K."/>
        </authorList>
    </citation>
    <scope>NUCLEOTIDE SEQUENCE [LARGE SCALE GENOMIC DNA]</scope>
    <source>
        <strain>LT2 / SGSC1412 / ATCC 700720</strain>
    </source>
</reference>
<proteinExistence type="inferred from homology"/>